<name>EBH_STAA3</name>
<reference key="1">
    <citation type="journal article" date="2006" name="Lancet">
        <title>Complete genome sequence of USA300, an epidemic clone of community-acquired meticillin-resistant Staphylococcus aureus.</title>
        <authorList>
            <person name="Diep B.A."/>
            <person name="Gill S.R."/>
            <person name="Chang R.F."/>
            <person name="Phan T.H."/>
            <person name="Chen J.H."/>
            <person name="Davidson M.G."/>
            <person name="Lin F."/>
            <person name="Lin J."/>
            <person name="Carleton H.A."/>
            <person name="Mongodin E.F."/>
            <person name="Sensabaugh G.F."/>
            <person name="Perdreau-Remington F."/>
        </authorList>
    </citation>
    <scope>NUCLEOTIDE SEQUENCE [LARGE SCALE GENOMIC DNA]</scope>
    <source>
        <strain>USA300</strain>
    </source>
</reference>
<dbReference type="EMBL" id="CP000255">
    <property type="protein sequence ID" value="ABD22444.1"/>
    <property type="molecule type" value="Genomic_DNA"/>
</dbReference>
<dbReference type="RefSeq" id="WP_001109328.1">
    <property type="nucleotide sequence ID" value="NZ_CP027476.1"/>
</dbReference>
<dbReference type="SMR" id="Q2FH04"/>
<dbReference type="KEGG" id="saa:SAUSA300_1327"/>
<dbReference type="HOGENOM" id="CLU_222673_0_0_9"/>
<dbReference type="OMA" id="DNHQTQI"/>
<dbReference type="Proteomes" id="UP000001939">
    <property type="component" value="Chromosome"/>
</dbReference>
<dbReference type="GO" id="GO:0005886">
    <property type="term" value="C:plasma membrane"/>
    <property type="evidence" value="ECO:0007669"/>
    <property type="project" value="UniProtKB-SubCell"/>
</dbReference>
<dbReference type="Gene3D" id="3.10.20.890">
    <property type="match status" value="1"/>
</dbReference>
<dbReference type="Gene3D" id="1.20.120.1850">
    <property type="entry name" value="Ebh helix bundles repeating unit (S and A modules)"/>
    <property type="match status" value="8"/>
</dbReference>
<dbReference type="Gene3D" id="1.20.5.420">
    <property type="entry name" value="Immunoglobulin FC, subunit C"/>
    <property type="match status" value="88"/>
</dbReference>
<dbReference type="InterPro" id="IPR011439">
    <property type="entry name" value="DUF1542"/>
</dbReference>
<dbReference type="InterPro" id="IPR026361">
    <property type="entry name" value="Ebh_dom"/>
</dbReference>
<dbReference type="InterPro" id="IPR051197">
    <property type="entry name" value="ECM-binding_protein"/>
</dbReference>
<dbReference type="InterPro" id="IPR020840">
    <property type="entry name" value="Extracell_matrix-bd_GA"/>
</dbReference>
<dbReference type="InterPro" id="IPR002988">
    <property type="entry name" value="GA_module"/>
</dbReference>
<dbReference type="InterPro" id="IPR009063">
    <property type="entry name" value="Ig/albumin-bd_sf"/>
</dbReference>
<dbReference type="InterPro" id="IPR005877">
    <property type="entry name" value="YSIRK_signal_dom"/>
</dbReference>
<dbReference type="NCBIfam" id="TIGR04264">
    <property type="entry name" value="hyperosmo_Ebh"/>
    <property type="match status" value="1"/>
</dbReference>
<dbReference type="NCBIfam" id="TIGR01168">
    <property type="entry name" value="YSIRK_signal"/>
    <property type="match status" value="1"/>
</dbReference>
<dbReference type="PANTHER" id="PTHR33150">
    <property type="entry name" value="EXTRACELLULAR MATRIX-BINDING PROTEIN EBH"/>
    <property type="match status" value="1"/>
</dbReference>
<dbReference type="PANTHER" id="PTHR33150:SF1">
    <property type="entry name" value="EXTRACELLULAR MATRIX-BINDING PROTEIN EBH"/>
    <property type="match status" value="1"/>
</dbReference>
<dbReference type="Pfam" id="PF07564">
    <property type="entry name" value="DUF1542"/>
    <property type="match status" value="7"/>
</dbReference>
<dbReference type="Pfam" id="PF07554">
    <property type="entry name" value="FIVAR"/>
    <property type="match status" value="51"/>
</dbReference>
<dbReference type="Pfam" id="PF01468">
    <property type="entry name" value="GA"/>
    <property type="match status" value="11"/>
</dbReference>
<dbReference type="Pfam" id="PF04650">
    <property type="entry name" value="YSIRK_signal"/>
    <property type="match status" value="1"/>
</dbReference>
<dbReference type="SMART" id="SM00844">
    <property type="entry name" value="GA"/>
    <property type="match status" value="52"/>
</dbReference>
<dbReference type="SUPFAM" id="SSF46997">
    <property type="entry name" value="Bacterial immunoglobulin/albumin-binding domains"/>
    <property type="match status" value="101"/>
</dbReference>
<accession>Q2FH04</accession>
<organism>
    <name type="scientific">Staphylococcus aureus (strain USA300)</name>
    <dbReference type="NCBI Taxonomy" id="367830"/>
    <lineage>
        <taxon>Bacteria</taxon>
        <taxon>Bacillati</taxon>
        <taxon>Bacillota</taxon>
        <taxon>Bacilli</taxon>
        <taxon>Bacillales</taxon>
        <taxon>Staphylococcaceae</taxon>
        <taxon>Staphylococcus</taxon>
    </lineage>
</organism>
<keyword id="KW-1003">Cell membrane</keyword>
<keyword id="KW-0472">Membrane</keyword>
<keyword id="KW-0677">Repeat</keyword>
<keyword id="KW-0732">Signal</keyword>
<keyword id="KW-0812">Transmembrane</keyword>
<keyword id="KW-1133">Transmembrane helix</keyword>
<comment type="subcellular location">
    <subcellularLocation>
        <location evidence="3">Cell membrane</location>
        <topology evidence="3">Single-pass membrane protein</topology>
    </subcellularLocation>
</comment>
<proteinExistence type="inferred from homology"/>
<evidence type="ECO:0000255" key="1"/>
<evidence type="ECO:0000256" key="2">
    <source>
        <dbReference type="SAM" id="MobiDB-lite"/>
    </source>
</evidence>
<evidence type="ECO:0000305" key="3"/>
<gene>
    <name type="primary">ebh</name>
    <name type="ordered locus">SAUSA300_1327</name>
</gene>
<feature type="signal peptide" evidence="1">
    <location>
        <begin position="1"/>
        <end position="39"/>
    </location>
</feature>
<feature type="chain" id="PRO_0000345971" description="Extracellular matrix-binding protein ebh">
    <location>
        <begin position="40"/>
        <end position="10421"/>
    </location>
</feature>
<feature type="transmembrane region" description="Helical" evidence="1">
    <location>
        <begin position="10227"/>
        <end position="10247"/>
    </location>
</feature>
<feature type="domain" description="FIVAR 1">
    <location>
        <begin position="2524"/>
        <end position="2580"/>
    </location>
</feature>
<feature type="domain" description="FIVAR 2">
    <location>
        <begin position="2610"/>
        <end position="2666"/>
    </location>
</feature>
<feature type="domain" description="FIVAR 3">
    <location>
        <begin position="2687"/>
        <end position="2750"/>
    </location>
</feature>
<feature type="domain" description="FIVAR 4">
    <location>
        <begin position="2780"/>
        <end position="2836"/>
    </location>
</feature>
<feature type="domain" description="FIVAR 5">
    <location>
        <begin position="2864"/>
        <end position="2919"/>
    </location>
</feature>
<feature type="domain" description="FIVAR 6">
    <location>
        <begin position="2947"/>
        <end position="3002"/>
    </location>
</feature>
<feature type="domain" description="FIVAR 7">
    <location>
        <begin position="3030"/>
        <end position="3085"/>
    </location>
</feature>
<feature type="domain" description="FIVAR 8">
    <location>
        <begin position="3154"/>
        <end position="3212"/>
    </location>
</feature>
<feature type="domain" description="FIVAR 9">
    <location>
        <begin position="3280"/>
        <end position="3339"/>
    </location>
</feature>
<feature type="domain" description="FIVAR 10">
    <location>
        <begin position="3407"/>
        <end position="3465"/>
    </location>
</feature>
<feature type="domain" description="FIVAR 11">
    <location>
        <begin position="3533"/>
        <end position="3591"/>
    </location>
</feature>
<feature type="domain" description="FIVAR 12">
    <location>
        <begin position="3659"/>
        <end position="3717"/>
    </location>
</feature>
<feature type="domain" description="FIVAR 13">
    <location>
        <begin position="3785"/>
        <end position="3843"/>
    </location>
</feature>
<feature type="domain" description="FIVAR 14">
    <location>
        <begin position="3911"/>
        <end position="3969"/>
    </location>
</feature>
<feature type="domain" description="FIVAR 15">
    <location>
        <begin position="4037"/>
        <end position="4095"/>
    </location>
</feature>
<feature type="domain" description="FIVAR 16">
    <location>
        <begin position="4163"/>
        <end position="4221"/>
    </location>
</feature>
<feature type="domain" description="FIVAR 17">
    <location>
        <begin position="4289"/>
        <end position="4347"/>
    </location>
</feature>
<feature type="domain" description="FIVAR 18">
    <location>
        <begin position="4415"/>
        <end position="4473"/>
    </location>
</feature>
<feature type="domain" description="FIVAR 19">
    <location>
        <begin position="4541"/>
        <end position="4599"/>
    </location>
</feature>
<feature type="domain" description="FIVAR 20">
    <location>
        <begin position="4667"/>
        <end position="4725"/>
    </location>
</feature>
<feature type="domain" description="FIVAR 21">
    <location>
        <begin position="4793"/>
        <end position="4851"/>
    </location>
</feature>
<feature type="domain" description="FIVAR 22">
    <location>
        <begin position="4919"/>
        <end position="4977"/>
    </location>
</feature>
<feature type="domain" description="FIVAR 23">
    <location>
        <begin position="5045"/>
        <end position="5103"/>
    </location>
</feature>
<feature type="domain" description="FIVAR 24">
    <location>
        <begin position="5171"/>
        <end position="5229"/>
    </location>
</feature>
<feature type="domain" description="FIVAR 25">
    <location>
        <begin position="5297"/>
        <end position="5355"/>
    </location>
</feature>
<feature type="domain" description="FIVAR 26">
    <location>
        <begin position="5423"/>
        <end position="5481"/>
    </location>
</feature>
<feature type="domain" description="FIVAR 27">
    <location>
        <begin position="5549"/>
        <end position="5607"/>
    </location>
</feature>
<feature type="domain" description="FIVAR 28">
    <location>
        <begin position="5675"/>
        <end position="5733"/>
    </location>
</feature>
<feature type="domain" description="FIVAR 29">
    <location>
        <begin position="5801"/>
        <end position="5859"/>
    </location>
</feature>
<feature type="domain" description="FIVAR 30">
    <location>
        <begin position="5927"/>
        <end position="5985"/>
    </location>
</feature>
<feature type="domain" description="FIVAR 31">
    <location>
        <begin position="6053"/>
        <end position="6111"/>
    </location>
</feature>
<feature type="domain" description="FIVAR 32">
    <location>
        <begin position="6179"/>
        <end position="6236"/>
    </location>
</feature>
<feature type="domain" description="FIVAR 33">
    <location>
        <begin position="6304"/>
        <end position="6362"/>
    </location>
</feature>
<feature type="domain" description="FIVAR 34">
    <location>
        <begin position="6430"/>
        <end position="6488"/>
    </location>
</feature>
<feature type="domain" description="FIVAR 35">
    <location>
        <begin position="6556"/>
        <end position="6614"/>
    </location>
</feature>
<feature type="domain" description="FIVAR 36">
    <location>
        <begin position="6682"/>
        <end position="6740"/>
    </location>
</feature>
<feature type="domain" description="FIVAR 37">
    <location>
        <begin position="6818"/>
        <end position="6866"/>
    </location>
</feature>
<feature type="domain" description="FIVAR 38">
    <location>
        <begin position="6934"/>
        <end position="6992"/>
    </location>
</feature>
<feature type="domain" description="FIVAR 39">
    <location>
        <begin position="7060"/>
        <end position="7118"/>
    </location>
</feature>
<feature type="domain" description="FIVAR 40">
    <location>
        <begin position="7186"/>
        <end position="7244"/>
    </location>
</feature>
<feature type="domain" description="FIVAR 41">
    <location>
        <begin position="7312"/>
        <end position="7370"/>
    </location>
</feature>
<feature type="domain" description="FIVAR 42">
    <location>
        <begin position="7438"/>
        <end position="7496"/>
    </location>
</feature>
<feature type="domain" description="FIVAR 43">
    <location>
        <begin position="7564"/>
        <end position="7622"/>
    </location>
</feature>
<feature type="domain" description="FIVAR 44">
    <location>
        <begin position="7690"/>
        <end position="7748"/>
    </location>
</feature>
<feature type="domain" description="FIVAR 45">
    <location>
        <begin position="7816"/>
        <end position="7874"/>
    </location>
</feature>
<feature type="domain" description="FIVAR 46">
    <location>
        <begin position="7942"/>
        <end position="8000"/>
    </location>
</feature>
<feature type="domain" description="FIVAR 47">
    <location>
        <begin position="8068"/>
        <end position="8129"/>
    </location>
</feature>
<feature type="domain" description="FIVAR 48">
    <location>
        <begin position="8194"/>
        <end position="8252"/>
    </location>
</feature>
<feature type="domain" description="FIVAR 49">
    <location>
        <begin position="8320"/>
        <end position="8378"/>
    </location>
</feature>
<feature type="domain" description="FIVAR 50">
    <location>
        <begin position="8446"/>
        <end position="8503"/>
    </location>
</feature>
<feature type="domain" description="FIVAR 51">
    <location>
        <begin position="8571"/>
        <end position="8629"/>
    </location>
</feature>
<feature type="domain" description="FIVAR 52">
    <location>
        <begin position="8697"/>
        <end position="8755"/>
    </location>
</feature>
<feature type="domain" description="FIVAR 53">
    <location>
        <begin position="8823"/>
        <end position="8881"/>
    </location>
</feature>
<feature type="domain" description="FIVAR 54">
    <location>
        <begin position="8949"/>
        <end position="9007"/>
    </location>
</feature>
<feature type="domain" description="FIVAR 55">
    <location>
        <begin position="9075"/>
        <end position="9129"/>
    </location>
</feature>
<feature type="domain" description="FIVAR 56">
    <location>
        <begin position="9197"/>
        <end position="9256"/>
    </location>
</feature>
<feature type="domain" description="FIVAR 57">
    <location>
        <begin position="9451"/>
        <end position="9507"/>
    </location>
</feature>
<feature type="region of interest" description="Disordered" evidence="2">
    <location>
        <begin position="41"/>
        <end position="86"/>
    </location>
</feature>
<feature type="region of interest" description="Disordered" evidence="2">
    <location>
        <begin position="99"/>
        <end position="152"/>
    </location>
</feature>
<feature type="region of interest" description="Disordered" evidence="2">
    <location>
        <begin position="250"/>
        <end position="277"/>
    </location>
</feature>
<feature type="region of interest" description="Disordered" evidence="2">
    <location>
        <begin position="1342"/>
        <end position="1373"/>
    </location>
</feature>
<feature type="region of interest" description="Disordered" evidence="2">
    <location>
        <begin position="2418"/>
        <end position="2438"/>
    </location>
</feature>
<feature type="region of interest" description="Disordered" evidence="2">
    <location>
        <begin position="10167"/>
        <end position="10186"/>
    </location>
</feature>
<feature type="region of interest" description="Disordered" evidence="2">
    <location>
        <begin position="10324"/>
        <end position="10421"/>
    </location>
</feature>
<feature type="compositionally biased region" description="Polar residues" evidence="2">
    <location>
        <begin position="41"/>
        <end position="59"/>
    </location>
</feature>
<feature type="compositionally biased region" description="Low complexity" evidence="2">
    <location>
        <begin position="65"/>
        <end position="80"/>
    </location>
</feature>
<feature type="compositionally biased region" description="Polar residues" evidence="2">
    <location>
        <begin position="99"/>
        <end position="117"/>
    </location>
</feature>
<feature type="compositionally biased region" description="Basic and acidic residues" evidence="2">
    <location>
        <begin position="130"/>
        <end position="140"/>
    </location>
</feature>
<feature type="compositionally biased region" description="Polar residues" evidence="2">
    <location>
        <begin position="141"/>
        <end position="151"/>
    </location>
</feature>
<feature type="compositionally biased region" description="Polar residues" evidence="2">
    <location>
        <begin position="250"/>
        <end position="266"/>
    </location>
</feature>
<feature type="compositionally biased region" description="Polar residues" evidence="2">
    <location>
        <begin position="1360"/>
        <end position="1373"/>
    </location>
</feature>
<feature type="compositionally biased region" description="Polar residues" evidence="2">
    <location>
        <begin position="2427"/>
        <end position="2438"/>
    </location>
</feature>
<feature type="compositionally biased region" description="Polar residues" evidence="2">
    <location>
        <begin position="10171"/>
        <end position="10183"/>
    </location>
</feature>
<feature type="compositionally biased region" description="Basic and acidic residues" evidence="2">
    <location>
        <begin position="10339"/>
        <end position="10349"/>
    </location>
</feature>
<feature type="compositionally biased region" description="Basic and acidic residues" evidence="2">
    <location>
        <begin position="10388"/>
        <end position="10398"/>
    </location>
</feature>
<feature type="compositionally biased region" description="Basic residues" evidence="2">
    <location>
        <begin position="10403"/>
        <end position="10421"/>
    </location>
</feature>
<sequence length="10421" mass="1122579">MNYRDKIQKFSIRKYTVGTFSTVIATLVFLGFNTSQAHAAETNQPASVVKQKQQSNNEQTENRESQVQNSQNSQNGQSLSATHENEQPNISQANLVDQKVAQSSTTNDEQPASQNVNTKKDSATAATTQPDKEQSKHKQNESQSANKNGNDNRAAHVENHEANVVTASDSSDNGNVQHDRNELQAFFDANYHDYRFIDRENADSGTFNYVKGIFDKINTLLGSNDPINNKDLQLAYKELEQAVALIRTMPQRQQTSRRSNRIQTRSVESRAAEPRSVSDYQNANSSYYVENANDGSGYPVGTYINASSKGAPYNLPTTPWNTLKASDSKEIALMTAKQTGDGYQWVIKFNKGHAPHQNMIFWFALPADQVPVGRTDFVTVNSDGTNVQWSHGAGAGANKPLQQMWEYGVNDPHRSHDFKIRNRSGQVIYDWPTVHIYSLEDLSRASDYFSEAGATPATKAFGRQNFEYINGQKPAESPGVPKVYTFIGQGDASYTISFKTQGPTVNKLYYAAGGRALEYNQLFMYSQLYVESTQDHQQRLNGLRQVVNRTYRIGTTKRVEVSQGNVQTKKVLESTNLNIDDFVDDPLSYVKTPSNKVLGFYSNNANTNAFRPGGAQQLNEYQLSQLFTDQKLQEAARTRNPIRLMIGFDYPDAYGNSETLVPVNLTVLPEIQHNIKFFKNDDTQNIAEKPFSKQAGHPVFYVYAGNQGNASVNLGGSVTSIQPLRINLTSNENFTDKDWQITGIPRTLHIENSTNRPNNARERNIELVGNLLPGDYFGTIRFGRKEQLFEIRVKPHTPTITTTAEQLRGTALQKVPVNISGIPLDPSALVYLVAPTNQTTNGGSEADQIPSGYTILATGTPDGVHNTITIRPQDYVVFIPPVGKQIRAVVYYNKVVASNMSNAVTILPDDIPPTINNPVGINAKYYRGDEVNFTMGVSDRHSGIKNTTITTLPNGWTSNLTKADKNNGSLSITGRVSMNQAFNSDITFKVSATDNVNNTTNDSQSKHVSIHVGKISEDAHPIVLGNTEKVVVVNPTAVSNDEKQSIITAFMNKNQNIRGYLASTDPVTVDNNGNVTLHYRDGSSTTLDATNVMTYEPVVKPEYQTVNAAKTATVTIAKGQSFSIGDIKQYFTLSNGQPIPSGTFTNITSDRTIPTAQEVSQMNAGTQLYHITATNAYHKDSEDFYISLKIIDVKQPEGDQRVYRTSTYDLTTDEISKVKQAFINANRDVITLAEGDISVTNTPNGANVSTITVNINKGRLTKSFASNLANMNFLRWVNFPQDYTVTWTNAKIANRPTDGGLSWSDDHKSLIYRYDATLGTQITTNDILTMLKATTTVPGLRNNITGNEKSQAEAGGRPNFRTTGYSQSNATTDGQRQFTLNGQVIQVLDIINPSNGYGGQPVTNSNTRANHSNSTVVNVNEPAANGAGAFTIDHVVKSNSTHNASDAVYKAQLYLTPYGPKQYVEHLNQNTGNTTDAINIYFVPSDLVNPTISVGNYTNHQVFSGETFTNTITANDNFGVQSVTVPNTSQITGTVDNNHQHVSATAPNVTSATNKTINLLATDTSGNTATTSFNVTVKPLRDKYRVGTSSTAANPVRIANISNNATVSQADQTTIINSLTFTETVPNRSYARASANEITSKTVSNVSRTGNNANVTVTVTYQDGTTSTVTVPVKHVIPEIVAHSHYTVQGQDFPAGNGSSASDYFKLSNGSDIADATITWVSGQAPNKDNTRIGEDITVTAHILIDGETTPITKTATYKVVRTVPKHVFETARGVLYPGVSDMYDAKQYVKPVNNSWSTNAQHMNFQFVGTYGPNKDVVGISTRLIRVTYDNRQTEDLTILSKVKPDPPRIDANSVTYKAGLTNQEIKVNNVLNNSSVKLFKADNTPLNVTNITHGSGFSSVVTVSDALPNGGIKAKSSISMNNVTYTTQDEHGQVVTVTRNESVDSNDSATVTVTPQLQATTEGAVFIKGGDGFDFGHVERFIQNPPHGATVAWHDSPDTWKNTVGNTHKTAVVTLPNGQGTRNVEVPVKVYPVANAKAPSRDVKGQNLTNGTDAMNYITFDPNTNTNGITAAWANRQQPNNQQAGVQHLNVDVTYPGISAAKRVPVTVNVYQFEFPQTTYTTTVGGTLASGTQASGYAHMQNATGLPTDGFTYKWNRDTTGTNDANWSAMNKPNVAKVVNAKYDVIYNGHTFATSLPAKFVVKDVQPAKPTVTETAAGAITIAPGANQTVNTHAGNVTTYADKLVIKRNGNVVTTFTRRNNTSPWVKEASAATVAGIAGTNNGITVAAGTFNPADTIQVVATQGSGETVSDEQRSDDFTVVAPQPNQATTKIWQNGHIDITPNNPSGHLINPTQAMDIAYTEKVGNGAEHSKTINVVRGQNNQWTIANKPDYVTLDAQTGKVTFNANTIKPNSSITITPKAGTGHSVSSNPSTLTAPAAHTVNTTEIVKDYGSNVTAAEINNAVQVANKRTATIKNGTAMPTNLAGGSTTTIPVTVTYNDGSTEEVQESIFTKADKRELITAKNHLDDPVSTEGKKPGTITQYNNAMHNAQQQINTAKTEAQQVINNERATPQQVSDALTKVRAAQTKIDQAKALLQNKEDNSQLVTSKNNLQSSVNQVPSTAGMTQQSIDNYNAKKREAETEITAAQRVIDNGDATAQQISDEKHRVDNALTALNQAKHDLTADTHALEQAVQQLNRTGTTTGKKPASITAYNNSIRALQSDLTSAKNSANAIIQKPIRTVQEVQSALTNVNRVNERLTQAINQLVPLADNSALKTAKTKLDEEINKSVTTDGMTQSSIQAYENAKRAGQTESTNAQNVINNGDATDQQIAAEKTKVEEKYNSLKQAIAGLTPDLAPLQTAKTQLQNDIDQPTSTTGMTSASIAAFNEKLSAARTKIQEIDRVLASHPDVATIRQNVTAANAAKSALDQARNGLTVDKAPLENAKNQLQHSIDTQTSTTGMTQDSINAYNAKLTAARNKIQQINQVLAGSPTVEQINTNTSTANQAKSDLDHARQALTPDKAPLQTAKTQLEQSINQPTDTTGMTTASLNAYNQKLQAARQKLTEINQVLNGNPTVQNINDKVTEANQAKDQLNTARQGLTLDRQPALTTLHGASNLNQAQQNNFTQQINAAQNHAALETIKSNITALNTAMTKLKDSVADNNTIKSDQNYTDATPANKQAYDNAVNAAKGVIGETTNPTMDVNTVNQKAASVKSTKDALDGQQNLQRAKTEATNAITHASDLNQAQKNALTQQVNSAQNVQAVNDIKQTTQSLNTAMTGLKRGVANHNQVVQSDNYVNADTNKKNDYNNAYNHANDIINGNAQHPVITPSDVNNALSNVTSKEHALNGEAKLNAAKQEANTALGHLNNLNNAQRQNLQSQINGAHQIDAVNTIKQNATNLNSAMGNLRQAVADKDQVKRTEDYADADTAKQNAYNSAVSSAETIINQTTNPTMSVDDVNRATSAVTSNKNALNGYEKLAQSKTDAARAIDALPHLNNAQKADVKSKINAASNIAGVNTVKQQGTDLNTAMGNLQGAINDEQTTLNSQNYQDATPSKKTAYTNAVQAAKDILNKSNGQNKTKDQVTEAMNQVNSAKNNLDGTRLLDQAKQTAKQQLNNMTHLTTAQKTNLTNQINSGTTVAGVQTVQSNANTLDQAMNTLRQSIANKDATKASEDYVDANNDKQTAYNNAVAAAETIINANSNPEMNPSTITQKAEQVNSSKTALNGDENLAAAKQNAKTYLNTLTSITDAQKNNLISQITSATRVSGVDTVKQNAQHLDQAMASLQNGINNESQVKSSEKYRDADTNKQQEYDNAITAAKAILNKSTGPNTAQNAVEAALQRVNNAKDALNGDAKLIAAQNAAKQHLGTLTHITTAQRNDLTNQISQATNLAGVESVKQNANSLDGAMGNLQTAINDKSGTLASQNFLDADEQKRNAYNQAVSAAETILNKQTGPNTAKTAVEQALNNVNNAKHALNGTQNLNNAKQAAITAINGASDLNQKQKDALKAQANGAQRVSNAQDVQHNATELNTAMGTLKHAIADKTNTLASSKYVNADSTKQNAYTTKVTNAEHIISGTPTVVTTPSEVTAAANQVNSAKQELNGDERLREAKQNANTAIDALTQLNTPQKAKLKEQVGQANRLEDVQTVQTNGQALNNAMKGLRDSIANETTVKTSQNYTDASPNNQSTYNSAVSNAKGIINQTNNPTMDTSAITQATTQVNNAKNGLNGAENLRNAQNTAKQNLNTLSHLTNNQKSAISSQIDRAGHVSEVTATKNAATELNTQMGNLEQAIHDQNTVKQSVKFTDADKAKRDAYTNAVSRAEAILNKTQGANTSKQDVEAAIQNVSSAKNALNGDQNVTNAKNAAKNALNNLTSINNAQKRDLTTKIDQATTVAGVEAVSNTSTQLNTAMANLQNGINDKTNTLASENYHDADSDKKTAYTQAVTNAENILNKNSGSNLDKTAVENALSQVANAKGALNGNHNLEQAKSNANTTINGLQHLTTAQKDKLKQQVQQAQNVAGVDTVKSSANTLNGAMGTLRNSIQDNTATKNGQNYLDATERNKTNYNNAVDSANGVINATSNPNMDANAINQIATQVTSTKNALDGTHNLTQAKQTATNAIDGATNLNKAQKDALKAQVTSAQRVANVTSIQQTANELNTAMGQLQHGIDDENATKQTQKYRDAEQSKKTAYDQAVAAAKAILNKQTGSNSDKAAVDRALQQVTSTKDALNGDAKLAEAKAAAKQNLGTLNHITNAQRTDLEGQINQATTVDGVNTVKTNANTLDGAMNSLQGSINDKDATLRNQNYLDADESKRNAYTQAVTAAEGILNKQTGGNTSKADVDNALNAVTRAKAALNGADNLRNAKTSATNTIDGLPNLTQLQKDNLKHQVEQAQNVAGVNGVKDKGNTLNTAMGALRTSIQNDNTTKTSQNYLDASDSNKNNYNTAVNNANGVINATNNPNMDANAINGMANQVNTTKAALNGAQNLAQAKTNATNTINNAHDLNQKQKDALKTQVNNAQRVSDANNVQHTATELNSAMTALKAAIADKERTKASGNYVNADQEKRQAYDSKVTNAENIISGTPNATLTVNDVNSAASQVNAAKTALNGDNNLRVAKEHANNTIDGLAQLNNAQKAKLKEQVQSATTLDGVQTVKNSSQTLNTAMKGLRDSIANEATIKAGQNYTDASPNNRNEYDSAVTAAKAIINQTSNPTMEPNTITQVTSQVTTKEQALNGARNLAQAKTTAKNNLNNLTSINNAQKDALTRSIDGATTVAGVNQETAKATELNNAMHSLQNGINDETQTKQTQKYLDAEPSKKSAYDQAVNAAKAILTKASGQNVDKAAVEQALQNVNSTKTALNGDAKLNEAKAAAKQTLGTLTHINNAQRTALDNEITQATNVEGVNTVKAKAQQLDGAMGQLETSIRDKDTTLQSQNYQDADDAKRTAYSQAVNAAATILNKTAGGNTPKADVERAMQAVTQANTALNGIQNLDRAKQAANTAITNASDLNTKQKEALKAQVTSAGRVSAANGVEHTATELNTAMTALKRAIADKAETKASGNYVNADANKRQAYDEKVTAAENIVSGTPTPTLTPADVTNAATQVTNAKTQLNGNHNLEVAKQNANTAIDGLTSLNGPQKAKLKEQVGQATTLPNVQTVRDNAQTLNTAMKGLRDSIANEATIKAGQNYTDASQNKQTDYNSAVTAAKAIIGQTTSPSMNAQEINQAKDQVTAKQQALNGQENLRTAQTNAKQHLNGLSDLTDAQKDAVKRQIEGATHVNEVTQAQNNADALNTAMTNLKNGIQDQNTIKQGVNFTDADEAKRNAYTNAVTQAEQILNKAQGPNTSKDGVETALENVQRAKNELNGNQNVANAKTTAKNALNNLTSINNAQKEALKSQIEGATTVAGVNQVSTTASELNTAMSNLQNGINDEAATKAAQKYTDADREKQTAYNDAVTAAKTLLDKTAGSNDNKAAVEQALQRVNTAKTALNGDERLNEAKNTAKQQVATMSHLTDAQKANLTSQIESGTTVAGVQGIQANAGTLDQAMNQLRQSIASKDATKSSEDYQDANADLQNAYNDAVTNAEGIISATNNPEMNPDTINQKASQVNSAKSALNGDEKLAAAKQTAKSDIGRLTDLNNAQRTAANAEVDQAPNLAAVTAAKNKATSLNTAMGNLKHALAEKDNTKRSVNYTDADQPKQQAYDTAVTQAEAITNANGSNANETQVQAALNQLNQAKNDLNGDNKVAQAKESAKRALASYSNLNNAQSTAAISQIDNATTVAGVTAAQNTANELNTAMGQLQNGINDQNTVKQQVNFTDADQGKKDAYTNAVTNAQGILDKAHGQNMTKAQVEAALNQVTTAKNALNGDANVRQAKSDAKANLGTLTHLNNAQKQDLTSQIEGATTVNGVNGVKTKAQDLDGAMQRLQSAIANKDQTKASENYIDADPTKKTAFDNAITQAESYLNKDHGANKDKQAVEQAIQSVTSTENALNGDANLQRAKTEAIQAIDNLTHLNTPQKTALKQQVNAAQRVSGVTDLKNSATSLNNAMDQLKQAIADHDTIVASGNYTNASPDKQGAYTDAYNAAKNIVNGSPNVITNAADVTAATQRVNNAETGLNGDTNLATAKQQAKDALRQMTHLSDAQKQSITGQIDSATQVTGVQSVKDNATNLDNAMNQLRNSIANKDDVKASQPYVDADRDKQNAYNTAVTNAENIINATSQPTLDPSAVTQAANQVSTNKTALNGAQNLANKKQETTANINQLSHLNNAQKQDLNTQVTNAPNISTVNQVKTKAEQLDQAMERLINGIQDKDQVKQSVNFTDADPEKQTAYNNAVTAAENIINQANGTNANQSQVEAALSTVTTTKQALNGDRKVTDAKNNANQTLSTLDNLNNAQKGAVTGNINQAHTVAEVTQAIQTAQELNTAMGNLKNSLNDKDTTLGSQNFADADPEKKNAYNEAVHNAENILNKSTGTNVPKDQVEAAMNQVNATKAALNGTQNLEKAKQHANTAIDGLSHLTNAQKEALKQLVQQSTTVAEAQGNEQKANNVDAAMDKLRQSIADNATTKQNQNYTDASQNKKDAYNNAVTTAQGIIDQTTSPTLDPTVINQAAGQVSTTKNALNGNENLEAAKQQASQSLGSLDNLNNAQKQTVTDQINGAHTVDEANQIKQNAQNLNTAMGNLKQAIADKDATKATVNFTDADQAKQQAYNTAVTNAENIISKANGGNATQAEVEQAIKQVNAAKQALNGNANVQHAKDEATALINSSNDLNQAQKDALKQQVQNATTVAGVNNVKQTAQELNNAMTQLKQGIADKEQTKADGNFVNADPDKQNAYNQAVAKAEALISATPDVVVTPSEITAALNKVTQAKNDLNGNTNLATAKQNVQHAIDQLPNLNQAQRDEYSKQITQATLVPNVNAIQQAATTLNDAMTQLKQGIANKAQIKGSENYHDADTDKQTAYDNAVTKAEELLKQTTNPTMDPNTIQQALTKVNDTNQALNGNQKLADAKQDAKTTLGTLDHLNDAQKQALTTQVEQAPDIATVNNVKQNAQNLNNAMTNLNNALQDKTETLNSINFTDADQAKKDAYTNAVSHAEGILSKANGSNASQTEVEQAMQRVNEAKQALNGNDNVQRAKDAAKQVITNANDLNQAQKDALKQQVDAAQTVANVNTIKQTAQDLNQAMTQLKQGIADKDQTKANGNFVNADTDKQNAYNNAVAHAEQIISGTPNANVDPQQVAQALQQVNQAKGDLNGNHNLQVAKDNANTAIDQLPNLNQPQKTALKDQVSHAELVTGVNAIKQNADALNNAMGTLKQQIQANSQVPQSVDFTQADQDKQQAYNNAANQAQQIANGIPTPVLTPDTVTQAVTTMNQAKDALNGDEKLAQAKQEALANLDTLRDLNQPQRDALRNQINQAQALATVEQTKQNAQNVNTAMSNLKQGIANKDTVKASENYHDADADKQTAYTNAVSQAEGIINQTTNPTLNPDEITRALTQVTDAKNGLNGEAKLATEKQNAKDAVSGMTHLNDAQKQALKGQIDQSPEIATVNQVKQTATSLDQAMDQLSQAINDKAQTLADGNYLNADPDKQNAYKQAVAKAEALLNKQSGTNEVQAQVESITNEVNAAKQALNGNDNLANAKQQAKQQLANLTHLNDAQKQSFESQITQAPLVTDVTTINQKAQTLDHAMELLRNSVADNQTTLASEDYHDATAQRQNDYNQAVTAANNIINQTTSPTMNPDDVNGATTQVNNTKVALDGDENLAAAKQQANNRLDQLDHLNNAQKQQLQSQITQSSDIAAVNGHKQTAESLNTAMGNLINAIADHQAVEQRGNFINADTDKQTAYNTAVNEAAAMINKQTGQNANQTEVEQAITKVQTTLQALNGDHNLQVAKTNATQAIDALTSLNDPQKTALKDQVTAATLVTAVHQIEQNANTLNQAMHGLRQSIQDNAATKANSKYINEDQPEQQNYDQAVQAANNIINEQTATLDNNAINQAATTVNTTKAALHGDVKLQNDKDHAKQTVSQLAHLNNAQKHMEDTLIDSETTRTAVKQDLTEAQALDQLMDALQQSIADKDATRASSAYVNAEPNKKQSYDEAVQNAESIIAGLNNPTINKGNVSSATQAVISSKNALDGVERLAQDKQTAGNSLNHLDQLTPAQQQALENQINNATTRGEVAQKLTEAQALNQAMEALRNSIQDQQQTEAGSKFINEDKPQKDAYQAAVQNAKDLINQTNNPTLDKAQVEQLTQAVNQAKDNLHGDQKLADDKQHAVTDLNQLNGLNNPQRQALESQINNAATRGEVAQKLAEAKALDQAMQALRNSIQDQQQTESGSKFINEDKPQKDAYQAAVQNAKDLINQTGNPTLDKSQVEQLTQAVTTAKDNLHGDQKLARDQQQAVTTVNALPNLNHAQQQALTDAINAAPTRTEVAQHVQTATELDHAMETLKNKVDQVNTDKAQPNYTEASTDKKEAVDQALQAAESITDPTNGSNANKDAVDQVLTKLQEKENELNGNERVAEAKTQAKQTIDQLTHLNADQIATAKQNIDQATKLQPIAELVDQATQLNQSMDQLQQAVNEHANVEQTVDYTQADSDKQNAYKQAIADAENVLKQNANKQQVDQALQNILNAKQALNGDERVALAKTNGKHDIDQLNALNNAQQDGFKGRIDQSNDLNQIQQIVDEAKALNRAMDQLSQEITDNEGRTKGSTNYVNADTQVKQVYDETVDKAKQALDKSTGQNLTAKQVIKLNDAVTAAKKALNGEERLNNRKAEALQRLDQLTHLNNAQRQLAIQQINNAETLNKASRAINRATKLDNAMGAVQQYIDEQHLGVISSTNYINADDNLKANYDNAIANAAHELDKVQGNAIAKAEAEQLKQNIIDAQNALNGDQNLANAKDKANAFVNSLNGLNQQQQDLAHKAINNADTVSDVTDIVNNQIDLNDAMETLKHLVDNEIPNAEQTVNYQNADDNAKTNFDDAKRLANTLLNSDNTNVNDINGAIQAVNDAIHNLNGDQRLQDAKDKAIQSINQALANKLKEIEASNATDQDKLIAKNKAEELANSIINNINKATSNQAVSQVQTAGNHAIEQVHANEIPKAKIDANKDVDKQVQALIDEIDRNPNLTDKEKQALKDRINQILQQGHNGINNAMTKEEIEQAKAQLAQALQDIKDLVKAKEDAKQDVDKQVQALIDEIDQNPNLTDKEKQALKYRINQILQQGHNDINNALTKEEIEQAKAQLAQALQDIKDLVKAKEDAKNAIKALANAKRDQINSNPDLTPEQKAKALKEIDEAEKRALQNVENAQTIDQLNRGLNLGLDDIRNTHVWEVDEQPAVNEIFEATPEQILVNGELIVHRDDIITEQDILAHINLIDQLSAEVIDTPSTATISDSLTAKVEVTLLDGSKVIVNVPVKVVEKELSVVKQQAIESIENAAQQKINEINNSVTLTLEQKEAAIAEVNKLKQQAIDHVNNAPDVHSVEEIQQQEQAHIEQFNPEQFTIEQAKSNAIKSIEDAIQHMIDEIKARTDLTDKEKQEAIAKLNQLKEQAIQAIQRAQSIDEISEQLEQFKAQMKAANPTAKELAKRKQEAISRIKDFSNEKINSIRNSEIGTADEKQAAMNQINEIVLETIRDINNAHTLQQVEAALNNGIARISAVQIVTSDRAKQSSSTGNESNSHLTIGYGTANHPFNSSTIGHKKKLDEDDDIDPLHMRHFSNNFGNVIKNAIGVVGISGLLASFWFFIAKRRRKEDEEEELEIRDNNKDSIKETLDDTKHLPLLFAKRRRKEDEEDVTVEEKDSLNNGESLDKVKHTPFFLPKRRRKEDEEDVEVTNENTDEKVLKDNEHSPLLFAKRRKDKEEDVETTTSIESKDEDVPLLLAKKKNQKDNQSKDKKSASKNTSKKVAAKKKKKKAKKNKK</sequence>
<protein>
    <recommendedName>
        <fullName>Extracellular matrix-binding protein ebh</fullName>
    </recommendedName>
    <alternativeName>
        <fullName>ECM-binding protein homolog</fullName>
    </alternativeName>
</protein>